<protein>
    <recommendedName>
        <fullName evidence="2">Mu-theraphotoxin-Hd1a</fullName>
        <shortName evidence="2">Mu-TRTX-Hd1a</shortName>
    </recommendedName>
</protein>
<dbReference type="PDB" id="2MPQ">
    <property type="method" value="NMR"/>
    <property type="chains" value="A=1-35"/>
</dbReference>
<dbReference type="PDBsum" id="2MPQ"/>
<dbReference type="SMR" id="A0A0J9X1W9"/>
<dbReference type="EvolutionaryTrace" id="A0A0J9X1W9"/>
<dbReference type="GO" id="GO:0005576">
    <property type="term" value="C:extracellular region"/>
    <property type="evidence" value="ECO:0007669"/>
    <property type="project" value="UniProtKB-SubCell"/>
</dbReference>
<dbReference type="GO" id="GO:0008200">
    <property type="term" value="F:ion channel inhibitor activity"/>
    <property type="evidence" value="ECO:0007669"/>
    <property type="project" value="InterPro"/>
</dbReference>
<dbReference type="GO" id="GO:0017080">
    <property type="term" value="F:sodium channel regulator activity"/>
    <property type="evidence" value="ECO:0007669"/>
    <property type="project" value="UniProtKB-KW"/>
</dbReference>
<dbReference type="GO" id="GO:0090729">
    <property type="term" value="F:toxin activity"/>
    <property type="evidence" value="ECO:0007669"/>
    <property type="project" value="UniProtKB-KW"/>
</dbReference>
<dbReference type="InterPro" id="IPR011696">
    <property type="entry name" value="Huwentoxin-1"/>
</dbReference>
<dbReference type="InterPro" id="IPR013140">
    <property type="entry name" value="Huwentoxin_CS1"/>
</dbReference>
<dbReference type="Pfam" id="PF07740">
    <property type="entry name" value="Toxin_12"/>
    <property type="match status" value="1"/>
</dbReference>
<dbReference type="SUPFAM" id="SSF57059">
    <property type="entry name" value="omega toxin-like"/>
    <property type="match status" value="1"/>
</dbReference>
<dbReference type="PROSITE" id="PS60021">
    <property type="entry name" value="HWTX_1"/>
    <property type="match status" value="1"/>
</dbReference>
<keyword id="KW-0002">3D-structure</keyword>
<keyword id="KW-0903">Direct protein sequencing</keyword>
<keyword id="KW-1015">Disulfide bond</keyword>
<keyword id="KW-0872">Ion channel impairing toxin</keyword>
<keyword id="KW-0960">Knottin</keyword>
<keyword id="KW-0528">Neurotoxin</keyword>
<keyword id="KW-0964">Secreted</keyword>
<keyword id="KW-0800">Toxin</keyword>
<keyword id="KW-0738">Voltage-gated sodium channel impairing toxin</keyword>
<sequence>ACLGFGKSCNPSNDQCCKSSSLACSTKHKWCKYEL</sequence>
<organism>
    <name type="scientific">Cyriopagopus doriae</name>
    <name type="common">Tarantula spider</name>
    <name type="synonym">Haplopelma doriae</name>
    <dbReference type="NCBI Taxonomy" id="2024410"/>
    <lineage>
        <taxon>Eukaryota</taxon>
        <taxon>Metazoa</taxon>
        <taxon>Ecdysozoa</taxon>
        <taxon>Arthropoda</taxon>
        <taxon>Chelicerata</taxon>
        <taxon>Arachnida</taxon>
        <taxon>Araneae</taxon>
        <taxon>Mygalomorphae</taxon>
        <taxon>Theraphosidae</taxon>
        <taxon>Cyriopagopus</taxon>
    </lineage>
</organism>
<proteinExistence type="evidence at protein level"/>
<accession>A0A0J9X1W9</accession>
<reference key="1">
    <citation type="journal article" date="2015" name="Br. J. Pharmacol.">
        <title>Seven novel modulators of the analgesic target NaV 1.7 uncovered using a high-throughput venom-based discovery approach.</title>
        <authorList>
            <person name="Klint J.K."/>
            <person name="Smith J.J."/>
            <person name="Vetter I."/>
            <person name="Rupasinghe D.B."/>
            <person name="Er S.Y."/>
            <person name="Senff S."/>
            <person name="Herzig V."/>
            <person name="Mobli M."/>
            <person name="Lewis R.J."/>
            <person name="Bosmans F."/>
            <person name="King G.F."/>
        </authorList>
    </citation>
    <scope>PROTEIN SEQUENCE</scope>
    <scope>FUNCTION</scope>
    <scope>MASS SPECTROMETRY</scope>
    <scope>STRUCTURE BY NMR</scope>
    <scope>DISULFIDE BONDS</scope>
    <scope>SUBCELLULAR LOCATION</scope>
    <source>
        <tissue>Venom</tissue>
    </source>
</reference>
<feature type="chain" id="PRO_0000441850" description="Mu-theraphotoxin-Hd1a" evidence="1">
    <location>
        <begin position="1"/>
        <end position="35"/>
    </location>
</feature>
<feature type="disulfide bond" evidence="1 5">
    <location>
        <begin position="2"/>
        <end position="17"/>
    </location>
</feature>
<feature type="disulfide bond" evidence="1 5">
    <location>
        <begin position="9"/>
        <end position="24"/>
    </location>
</feature>
<feature type="disulfide bond" evidence="1 5">
    <location>
        <begin position="16"/>
        <end position="31"/>
    </location>
</feature>
<feature type="helix" evidence="6">
    <location>
        <begin position="18"/>
        <end position="20"/>
    </location>
</feature>
<feature type="strand" evidence="6">
    <location>
        <begin position="22"/>
        <end position="24"/>
    </location>
</feature>
<feature type="turn" evidence="6">
    <location>
        <begin position="26"/>
        <end position="28"/>
    </location>
</feature>
<feature type="strand" evidence="6">
    <location>
        <begin position="30"/>
        <end position="33"/>
    </location>
</feature>
<name>HD1A_CYRDO</name>
<evidence type="ECO:0000269" key="1">
    <source>
    </source>
</evidence>
<evidence type="ECO:0000303" key="2">
    <source>
    </source>
</evidence>
<evidence type="ECO:0000305" key="3"/>
<evidence type="ECO:0000305" key="4">
    <source>
    </source>
</evidence>
<evidence type="ECO:0000312" key="5">
    <source>
        <dbReference type="PDB" id="2MPQ"/>
    </source>
</evidence>
<evidence type="ECO:0007829" key="6">
    <source>
        <dbReference type="PDB" id="2MPQ"/>
    </source>
</evidence>
<comment type="function">
    <text evidence="1">Gating-modifier toxin that reversibly and voltage-independently inhibits human Nav1.1/SCN1A and Nav1.7/SCN9A (IC(50)=111 nM) (PubMed:25754331). It also shows moderate inhibition on Nav1.2/SCN2A (1 uM inhibits current by 55%), Nav1.6/SCN8A (31%), Nav1.3/SCN5A (27%) and Nav1.4/SCN4A (23%) (PubMed:25754331). This toxin inhibits Nav1.7/SCN9A by interacting with the S3b-S4 paddle motif in channel domain II (PubMed:25754331).</text>
</comment>
<comment type="subcellular location">
    <subcellularLocation>
        <location evidence="1">Secreted</location>
    </subcellularLocation>
</comment>
<comment type="tissue specificity">
    <text evidence="4">Expressed by the venom gland.</text>
</comment>
<comment type="domain">
    <text evidence="1">The presence of a 'disulfide through disulfide knot' structurally defines this protein as a knottin.</text>
</comment>
<comment type="mass spectrometry">
    <text>Monoisotopic mass.</text>
</comment>
<comment type="miscellaneous">
    <text evidence="1">Negative results: does not inhibit Nav1.5/SCN5A, Nav1.8/SCN10A, and presumably not Nav1.9/SCN11A voltage-gated sodium channels.</text>
</comment>
<comment type="similarity">
    <text evidence="3">Belongs to the neurotoxin 10 (Hwtx-1) family. 22 (Htx-4) subfamily.</text>
</comment>
<comment type="online information" name="Biological Magnetic Resonance Data Bank">
    <link uri="https://bmrb.io/data_library/summary/index.php?bmrbId=19998"/>
</comment>